<reference key="1">
    <citation type="journal article" date="1992" name="Neuron">
        <title>Molecular cloning and expression of a high affinity L-proline transporter expressed in putative glutamatergic pathways of rat brain.</title>
        <authorList>
            <person name="Fremeau R.T. Jr."/>
            <person name="Caron M.G."/>
            <person name="Blakely R.D."/>
        </authorList>
    </citation>
    <scope>NUCLEOTIDE SEQUENCE [MRNA]</scope>
    <source>
        <strain>Sprague-Dawley</strain>
        <tissue>Brain</tissue>
    </source>
</reference>
<reference key="2">
    <citation type="journal article" date="1999" name="J. Neurosci.">
        <title>L-proline and L-pipecolate induce enkephalin-sensitive currents in human embryonic kidney 293 cells transfected with the high-affinity mammalian brain L-proline transporter.</title>
        <authorList>
            <person name="Galli A."/>
            <person name="Jayanthi L.D."/>
            <person name="Ramsey I.S."/>
            <person name="Miller J.W."/>
            <person name="Fremeau R.T. Jr."/>
            <person name="DeFelice L.J."/>
        </authorList>
    </citation>
    <scope>FUNCTION</scope>
    <scope>TRANSPORTER ACTIVITY</scope>
    <scope>BIOPHYSICOCHEMICAL PROPERTIES</scope>
</reference>
<reference key="3">
    <citation type="journal article" date="2006" name="Proc. Natl. Acad. Sci. U.S.A.">
        <title>Quantitative phosphoproteomics of vasopressin-sensitive renal cells: regulation of aquaporin-2 phosphorylation at two sites.</title>
        <authorList>
            <person name="Hoffert J.D."/>
            <person name="Pisitkun T."/>
            <person name="Wang G."/>
            <person name="Shen R.-F."/>
            <person name="Knepper M.A."/>
        </authorList>
    </citation>
    <scope>PHOSPHORYLATION [LARGE SCALE ANALYSIS] AT SER-573; SER-582; THR-588 AND TYR-591</scope>
    <scope>IDENTIFICATION BY MASS SPECTROMETRY [LARGE SCALE ANALYSIS]</scope>
</reference>
<reference key="4">
    <citation type="journal article" date="2012" name="Nat. Commun.">
        <title>Quantitative maps of protein phosphorylation sites across 14 different rat organs and tissues.</title>
        <authorList>
            <person name="Lundby A."/>
            <person name="Secher A."/>
            <person name="Lage K."/>
            <person name="Nordsborg N.B."/>
            <person name="Dmytriyev A."/>
            <person name="Lundby C."/>
            <person name="Olsen J.V."/>
        </authorList>
    </citation>
    <scope>PHOSPHORYLATION [LARGE SCALE ANALYSIS] AT THR-20 AND SER-22</scope>
    <scope>IDENTIFICATION BY MASS SPECTROMETRY [LARGE SCALE ANALYSIS]</scope>
</reference>
<name>SC6A7_RAT</name>
<protein>
    <recommendedName>
        <fullName>Sodium-dependent proline transporter</fullName>
    </recommendedName>
    <alternativeName>
        <fullName>Solute carrier family 6 member 7</fullName>
    </alternativeName>
</protein>
<proteinExistence type="evidence at protein level"/>
<keyword id="KW-0029">Amino-acid transport</keyword>
<keyword id="KW-1003">Cell membrane</keyword>
<keyword id="KW-0325">Glycoprotein</keyword>
<keyword id="KW-0472">Membrane</keyword>
<keyword id="KW-0532">Neurotransmitter transport</keyword>
<keyword id="KW-0597">Phosphoprotein</keyword>
<keyword id="KW-1185">Reference proteome</keyword>
<keyword id="KW-0769">Symport</keyword>
<keyword id="KW-0770">Synapse</keyword>
<keyword id="KW-0812">Transmembrane</keyword>
<keyword id="KW-1133">Transmembrane helix</keyword>
<keyword id="KW-0813">Transport</keyword>
<gene>
    <name type="primary">Slc6a7</name>
    <name evidence="5" type="synonym">Prot</name>
</gene>
<feature type="chain" id="PRO_0000214772" description="Sodium-dependent proline transporter">
    <location>
        <begin position="1"/>
        <end position="637"/>
    </location>
</feature>
<feature type="topological domain" description="Cytoplasmic" evidence="3">
    <location>
        <begin position="1"/>
        <end position="45"/>
    </location>
</feature>
<feature type="transmembrane region" description="Helical; Name=1" evidence="3">
    <location>
        <begin position="46"/>
        <end position="66"/>
    </location>
</feature>
<feature type="transmembrane region" description="Helical; Name=2" evidence="3">
    <location>
        <begin position="74"/>
        <end position="93"/>
    </location>
</feature>
<feature type="transmembrane region" description="Helical; Name=3" evidence="3">
    <location>
        <begin position="117"/>
        <end position="137"/>
    </location>
</feature>
<feature type="topological domain" description="Extracellular" evidence="3">
    <location>
        <begin position="138"/>
        <end position="214"/>
    </location>
</feature>
<feature type="transmembrane region" description="Helical; Name=4" evidence="3">
    <location>
        <begin position="215"/>
        <end position="233"/>
    </location>
</feature>
<feature type="transmembrane region" description="Helical; Name=5" evidence="3">
    <location>
        <begin position="242"/>
        <end position="259"/>
    </location>
</feature>
<feature type="transmembrane region" description="Helical; Name=6" evidence="3">
    <location>
        <begin position="295"/>
        <end position="312"/>
    </location>
</feature>
<feature type="transmembrane region" description="Helical; Name=7" evidence="3">
    <location>
        <begin position="324"/>
        <end position="345"/>
    </location>
</feature>
<feature type="transmembrane region" description="Helical; Name=8" evidence="3">
    <location>
        <begin position="378"/>
        <end position="397"/>
    </location>
</feature>
<feature type="transmembrane region" description="Helical; Name=9" evidence="3">
    <location>
        <begin position="425"/>
        <end position="443"/>
    </location>
</feature>
<feature type="transmembrane region" description="Helical; Name=10" evidence="3">
    <location>
        <begin position="459"/>
        <end position="479"/>
    </location>
</feature>
<feature type="transmembrane region" description="Helical; Name=11" evidence="3">
    <location>
        <begin position="500"/>
        <end position="519"/>
    </location>
</feature>
<feature type="transmembrane region" description="Helical; Name=12" evidence="3">
    <location>
        <begin position="538"/>
        <end position="556"/>
    </location>
</feature>
<feature type="topological domain" description="Cytoplasmic" evidence="3">
    <location>
        <begin position="557"/>
        <end position="637"/>
    </location>
</feature>
<feature type="modified residue" description="Phosphothreonine" evidence="9">
    <location>
        <position position="20"/>
    </location>
</feature>
<feature type="modified residue" description="Phosphoserine" evidence="9">
    <location>
        <position position="22"/>
    </location>
</feature>
<feature type="modified residue" description="Phosphoserine" evidence="8">
    <location>
        <position position="573"/>
    </location>
</feature>
<feature type="modified residue" description="Phosphoserine" evidence="8">
    <location>
        <position position="582"/>
    </location>
</feature>
<feature type="modified residue" description="Phosphothreonine" evidence="8">
    <location>
        <position position="588"/>
    </location>
</feature>
<feature type="modified residue" description="Phosphotyrosine" evidence="8">
    <location>
        <position position="591"/>
    </location>
</feature>
<feature type="modified residue" description="Phosphoserine" evidence="1">
    <location>
        <position position="598"/>
    </location>
</feature>
<feature type="modified residue" description="Phosphoserine" evidence="1">
    <location>
        <position position="600"/>
    </location>
</feature>
<feature type="glycosylation site" description="N-linked (GlcNAc...) asparagine" evidence="3">
    <location>
        <position position="182"/>
    </location>
</feature>
<accession>P28573</accession>
<organism>
    <name type="scientific">Rattus norvegicus</name>
    <name type="common">Rat</name>
    <dbReference type="NCBI Taxonomy" id="10116"/>
    <lineage>
        <taxon>Eukaryota</taxon>
        <taxon>Metazoa</taxon>
        <taxon>Chordata</taxon>
        <taxon>Craniata</taxon>
        <taxon>Vertebrata</taxon>
        <taxon>Euteleostomi</taxon>
        <taxon>Mammalia</taxon>
        <taxon>Eutheria</taxon>
        <taxon>Euarchontoglires</taxon>
        <taxon>Glires</taxon>
        <taxon>Rodentia</taxon>
        <taxon>Myomorpha</taxon>
        <taxon>Muroidea</taxon>
        <taxon>Muridae</taxon>
        <taxon>Murinae</taxon>
        <taxon>Rattus</taxon>
    </lineage>
</organism>
<dbReference type="EMBL" id="M88111">
    <property type="protein sequence ID" value="AAA41541.1"/>
    <property type="status" value="ALT_TERM"/>
    <property type="molecule type" value="mRNA"/>
</dbReference>
<dbReference type="PIR" id="JH0674">
    <property type="entry name" value="JH0674"/>
</dbReference>
<dbReference type="RefSeq" id="NP_446448.2">
    <property type="nucleotide sequence ID" value="NM_053996.2"/>
</dbReference>
<dbReference type="SMR" id="P28573"/>
<dbReference type="FunCoup" id="P28573">
    <property type="interactions" value="226"/>
</dbReference>
<dbReference type="STRING" id="10116.ENSRNOP00000074128"/>
<dbReference type="TCDB" id="2.A.22.2.1">
    <property type="family name" value="the neurotransmitter:sodium symporter (nss) family"/>
</dbReference>
<dbReference type="GlyCosmos" id="P28573">
    <property type="glycosylation" value="1 site, No reported glycans"/>
</dbReference>
<dbReference type="GlyGen" id="P28573">
    <property type="glycosylation" value="1 site"/>
</dbReference>
<dbReference type="iPTMnet" id="P28573"/>
<dbReference type="PhosphoSitePlus" id="P28573"/>
<dbReference type="PaxDb" id="10116-ENSRNOP00000025209"/>
<dbReference type="GeneID" id="117100"/>
<dbReference type="KEGG" id="rno:117100"/>
<dbReference type="UCSC" id="RGD:620928">
    <property type="organism name" value="rat"/>
</dbReference>
<dbReference type="AGR" id="RGD:620928"/>
<dbReference type="CTD" id="6534"/>
<dbReference type="RGD" id="620928">
    <property type="gene designation" value="Slc6a7"/>
</dbReference>
<dbReference type="eggNOG" id="KOG3660">
    <property type="taxonomic scope" value="Eukaryota"/>
</dbReference>
<dbReference type="InParanoid" id="P28573"/>
<dbReference type="OrthoDB" id="6581954at2759"/>
<dbReference type="PhylomeDB" id="P28573"/>
<dbReference type="Reactome" id="R-RNO-442660">
    <property type="pathway name" value="Na+/Cl- dependent neurotransmitter transporters"/>
</dbReference>
<dbReference type="Reactome" id="R-RNO-71288">
    <property type="pathway name" value="Creatine metabolism"/>
</dbReference>
<dbReference type="PRO" id="PR:P28573"/>
<dbReference type="Proteomes" id="UP000002494">
    <property type="component" value="Unplaced"/>
</dbReference>
<dbReference type="GO" id="GO:0098978">
    <property type="term" value="C:glutamatergic synapse"/>
    <property type="evidence" value="ECO:0000314"/>
    <property type="project" value="SynGO"/>
</dbReference>
<dbReference type="GO" id="GO:0005886">
    <property type="term" value="C:plasma membrane"/>
    <property type="evidence" value="ECO:0000318"/>
    <property type="project" value="GO_Central"/>
</dbReference>
<dbReference type="GO" id="GO:0042734">
    <property type="term" value="C:presynaptic membrane"/>
    <property type="evidence" value="ECO:0000314"/>
    <property type="project" value="SynGO"/>
</dbReference>
<dbReference type="GO" id="GO:0098685">
    <property type="term" value="C:Schaffer collateral - CA1 synapse"/>
    <property type="evidence" value="ECO:0000314"/>
    <property type="project" value="SynGO"/>
</dbReference>
<dbReference type="GO" id="GO:0045202">
    <property type="term" value="C:synapse"/>
    <property type="evidence" value="ECO:0000269"/>
    <property type="project" value="SynGO"/>
</dbReference>
<dbReference type="GO" id="GO:0030672">
    <property type="term" value="C:synaptic vesicle membrane"/>
    <property type="evidence" value="ECO:0000314"/>
    <property type="project" value="SynGO"/>
</dbReference>
<dbReference type="GO" id="GO:0015193">
    <property type="term" value="F:L-proline transmembrane transporter activity"/>
    <property type="evidence" value="ECO:0000314"/>
    <property type="project" value="UniProtKB"/>
</dbReference>
<dbReference type="GO" id="GO:0005298">
    <property type="term" value="F:proline:sodium symporter activity"/>
    <property type="evidence" value="ECO:0000314"/>
    <property type="project" value="UniProtKB"/>
</dbReference>
<dbReference type="GO" id="GO:1903804">
    <property type="term" value="P:glycine import across plasma membrane"/>
    <property type="evidence" value="ECO:0000318"/>
    <property type="project" value="GO_Central"/>
</dbReference>
<dbReference type="GO" id="GO:0006836">
    <property type="term" value="P:neurotransmitter transport"/>
    <property type="evidence" value="ECO:0007669"/>
    <property type="project" value="UniProtKB-KW"/>
</dbReference>
<dbReference type="GO" id="GO:0035524">
    <property type="term" value="P:proline transmembrane transport"/>
    <property type="evidence" value="ECO:0000266"/>
    <property type="project" value="RGD"/>
</dbReference>
<dbReference type="GO" id="GO:0015824">
    <property type="term" value="P:proline transport"/>
    <property type="evidence" value="ECO:0000314"/>
    <property type="project" value="UniProtKB"/>
</dbReference>
<dbReference type="GO" id="GO:0030163">
    <property type="term" value="P:protein catabolic process"/>
    <property type="evidence" value="ECO:0000269"/>
    <property type="project" value="SynGO"/>
</dbReference>
<dbReference type="GO" id="GO:0035725">
    <property type="term" value="P:sodium ion transmembrane transport"/>
    <property type="evidence" value="ECO:0000318"/>
    <property type="project" value="GO_Central"/>
</dbReference>
<dbReference type="InterPro" id="IPR000175">
    <property type="entry name" value="Na/ntran_symport"/>
</dbReference>
<dbReference type="InterPro" id="IPR037272">
    <property type="entry name" value="SNS_sf"/>
</dbReference>
<dbReference type="PANTHER" id="PTHR11616:SF231">
    <property type="entry name" value="SODIUM-DEPENDENT PROLINE TRANSPORTER"/>
    <property type="match status" value="1"/>
</dbReference>
<dbReference type="PANTHER" id="PTHR11616">
    <property type="entry name" value="SODIUM/CHLORIDE DEPENDENT TRANSPORTER"/>
    <property type="match status" value="1"/>
</dbReference>
<dbReference type="Pfam" id="PF00209">
    <property type="entry name" value="SNF"/>
    <property type="match status" value="1"/>
</dbReference>
<dbReference type="PRINTS" id="PR00176">
    <property type="entry name" value="NANEUSMPORT"/>
</dbReference>
<dbReference type="SUPFAM" id="SSF161070">
    <property type="entry name" value="SNF-like"/>
    <property type="match status" value="1"/>
</dbReference>
<dbReference type="PROSITE" id="PS00610">
    <property type="entry name" value="NA_NEUROTRAN_SYMP_1"/>
    <property type="match status" value="1"/>
</dbReference>
<dbReference type="PROSITE" id="PS00754">
    <property type="entry name" value="NA_NEUROTRAN_SYMP_2"/>
    <property type="match status" value="1"/>
</dbReference>
<dbReference type="PROSITE" id="PS50267">
    <property type="entry name" value="NA_NEUROTRAN_SYMP_3"/>
    <property type="match status" value="1"/>
</dbReference>
<comment type="function">
    <text evidence="4 7">Brain specific sodium (and chloride)-dependent proline transporter (PubMed:10414958). Terminates the action of proline by its high affinity sodium-dependent reuptake into presynaptic terminals (Probable).</text>
</comment>
<comment type="catalytic activity">
    <reaction evidence="4">
        <text>L-proline(out) + chloride(out) + 2 Na(+)(out) = L-proline(in) + chloride(in) + 2 Na(+)(in)</text>
        <dbReference type="Rhea" id="RHEA:71263"/>
        <dbReference type="ChEBI" id="CHEBI:17996"/>
        <dbReference type="ChEBI" id="CHEBI:29101"/>
        <dbReference type="ChEBI" id="CHEBI:60039"/>
    </reaction>
</comment>
<comment type="catalytic activity">
    <reaction evidence="4">
        <text>L-pipecolate(out) + chloride(out) + 2 Na(+)(out) = L-pipecolate(in) + chloride(in) + 2 Na(+)(in)</text>
        <dbReference type="Rhea" id="RHEA:71267"/>
        <dbReference type="ChEBI" id="CHEBI:17996"/>
        <dbReference type="ChEBI" id="CHEBI:29101"/>
        <dbReference type="ChEBI" id="CHEBI:61185"/>
    </reaction>
</comment>
<comment type="biophysicochemical properties">
    <kinetics>
        <KM evidence="4">20.12 uM for L-proline</KM>
    </kinetics>
</comment>
<comment type="subcellular location">
    <subcellularLocation>
        <location evidence="2">Synaptic cell membrane</location>
        <topology evidence="3">Multi-pass membrane protein</topology>
    </subcellularLocation>
</comment>
<comment type="tissue specificity">
    <text>Expressed in subpopulations of putative glutamatergic pathways of rat brain.</text>
</comment>
<comment type="similarity">
    <text evidence="6">Belongs to the sodium:neurotransmitter symporter (SNF) (TC 2.A.22) family. SLC6A7 subfamily.</text>
</comment>
<evidence type="ECO:0000250" key="1">
    <source>
        <dbReference type="UniProtKB" id="Q6PGE7"/>
    </source>
</evidence>
<evidence type="ECO:0000250" key="2">
    <source>
        <dbReference type="UniProtKB" id="Q99884"/>
    </source>
</evidence>
<evidence type="ECO:0000255" key="3"/>
<evidence type="ECO:0000269" key="4">
    <source>
    </source>
</evidence>
<evidence type="ECO:0000303" key="5">
    <source>
    </source>
</evidence>
<evidence type="ECO:0000305" key="6"/>
<evidence type="ECO:0000305" key="7">
    <source>
    </source>
</evidence>
<evidence type="ECO:0007744" key="8">
    <source>
    </source>
</evidence>
<evidence type="ECO:0007744" key="9">
    <source>
    </source>
</evidence>
<sequence length="637" mass="71091">MKKLQEAHLRKPVTPDLLMTPSDQGDVDLDVDFAADRGNWTGKLDFLLSCIGYCVGLGNVWRFPYRAYTNGGGAFLVPYFLMLAICGIPLFFLELSLGQFSSLGPLAVWKISPLFKGAGAAMLLIVGLVAIYYNMIIAYVLFYLFASLTSNLPWEHCGNWWNTERCLEHRGPKDGNGALPLNLSSTVSPSEEYWSRYVLHIQGSQGIGRPGEIRWNLCLCLLLAWVIVFLCILKGVKSSGKVVYFTATFPYLILLMLLVRGVTLPGAWKGIQFYLTPQFHHLLSSKVWIEAALQIFYSLGVGFGGLLTFASYNTFHQNIYRDTFIVTLGNAITSILAGFAIFSVLGYMSQELGVPVDQVAKAGPGLAFVIYPQAMTMLPLSPFWSFLFFFMLLTLGLDSQFAFLETIVTAVTDEFPYYLRPKKAVFSGLICVAMYLMGLILTTDGGMYWLVLLDDYSASFGLMVVVITTCLAVTRVYGIQRFCRDIHMMLGFKPGLYFRACWLFLSPATLLALLVYSIVKYQPSEYGSYRFPAWAELLGILMGLLSCLMIPAGMLVAVLREEGSLWERLQQASRPAIDWGPSLEENRTGMYVATLAGSQSPKPLMVHMRKYGGITSFENTAIEVDREIAEEEEESMM</sequence>